<sequence>MDWEKLGLKMGLEIHQQLNTKHKLFCPCKTELVDEDYNEIVERNLRPTQSELGEIDRAALQESLRGLNFKYESYDHHTCLVESDDEPPHSLNKEALEICITIAALMNMHIVDEFHTMRKQVIDGSNTGGFQRTGLAATDGYLDTPYGRVAIESLGLEEDAARRIETTEDYTEFRLDRLGIPLAEITTDPSMHHPDQVREVAYMIGQVLRSTNVKRGLGTIRQDLNISIEKGARVEIKGVQNLDLMSEIVENEVQRQLALIEIKEELNKRNAEVLEEIHDLDSLFENTKSKILSSAESIKAVVLKGFNGLIGKEVQPGRRFGTEIASYAKKRGVSGIFHSDELPAYGITQDEVNSVKDYLNVGSQDAFIIVAHDENVAISALEEVKRRANLGFEGVVEETRKSLDDGNTEYMRPLPTANRMYLETDIPLFKITDELVEPIKNNLPELPDVKKERIIKEYNLSEDLASQLVKRLEADVFEEILTDVEVDPTPVASLLAYDLREIKREGLDIDILTTRHLKDIFQLLADSKIAKDSVTKLTTCVIQSPDEEIEITAKNNNLTLLSHEEVTQIIEDIVNKNEAMVKERQMGAMGPLMGMSMKELKGKADGSIVNRIVKESIQKML</sequence>
<gene>
    <name evidence="1" type="primary">gatE</name>
    <name type="ordered locus">Msm_0335</name>
</gene>
<dbReference type="EC" id="6.3.5.-" evidence="1"/>
<dbReference type="EMBL" id="CP000678">
    <property type="protein sequence ID" value="ABQ86540.1"/>
    <property type="molecule type" value="Genomic_DNA"/>
</dbReference>
<dbReference type="RefSeq" id="WP_004034546.1">
    <property type="nucleotide sequence ID" value="NZ_CP117965.1"/>
</dbReference>
<dbReference type="SMR" id="A5UK12"/>
<dbReference type="STRING" id="420247.Msm_0335"/>
<dbReference type="EnsemblBacteria" id="ABQ86540">
    <property type="protein sequence ID" value="ABQ86540"/>
    <property type="gene ID" value="Msm_0335"/>
</dbReference>
<dbReference type="GeneID" id="78816959"/>
<dbReference type="KEGG" id="msi:Msm_0335"/>
<dbReference type="PATRIC" id="fig|420247.28.peg.338"/>
<dbReference type="eggNOG" id="arCOG01719">
    <property type="taxonomic scope" value="Archaea"/>
</dbReference>
<dbReference type="HOGENOM" id="CLU_030702_0_0_2"/>
<dbReference type="Proteomes" id="UP000001992">
    <property type="component" value="Chromosome"/>
</dbReference>
<dbReference type="GO" id="GO:0005737">
    <property type="term" value="C:cytoplasm"/>
    <property type="evidence" value="ECO:0007669"/>
    <property type="project" value="InterPro"/>
</dbReference>
<dbReference type="GO" id="GO:0004812">
    <property type="term" value="F:aminoacyl-tRNA ligase activity"/>
    <property type="evidence" value="ECO:0007669"/>
    <property type="project" value="InterPro"/>
</dbReference>
<dbReference type="GO" id="GO:0005524">
    <property type="term" value="F:ATP binding"/>
    <property type="evidence" value="ECO:0007669"/>
    <property type="project" value="UniProtKB-KW"/>
</dbReference>
<dbReference type="GO" id="GO:0050567">
    <property type="term" value="F:glutaminyl-tRNA synthase (glutamine-hydrolyzing) activity"/>
    <property type="evidence" value="ECO:0007669"/>
    <property type="project" value="UniProtKB-UniRule"/>
</dbReference>
<dbReference type="GO" id="GO:0070681">
    <property type="term" value="P:glutaminyl-tRNAGln biosynthesis via transamidation"/>
    <property type="evidence" value="ECO:0007669"/>
    <property type="project" value="TreeGrafter"/>
</dbReference>
<dbReference type="GO" id="GO:0006412">
    <property type="term" value="P:translation"/>
    <property type="evidence" value="ECO:0007669"/>
    <property type="project" value="UniProtKB-UniRule"/>
</dbReference>
<dbReference type="Gene3D" id="1.10.10.410">
    <property type="match status" value="1"/>
</dbReference>
<dbReference type="Gene3D" id="3.30.1360.30">
    <property type="entry name" value="GAD-like domain"/>
    <property type="match status" value="1"/>
</dbReference>
<dbReference type="Gene3D" id="1.10.150.380">
    <property type="entry name" value="GatB domain, N-terminal subdomain"/>
    <property type="match status" value="1"/>
</dbReference>
<dbReference type="HAMAP" id="MF_00588">
    <property type="entry name" value="GatE"/>
    <property type="match status" value="1"/>
</dbReference>
<dbReference type="InterPro" id="IPR017959">
    <property type="entry name" value="Asn/Gln-tRNA_amidoTrfase_suB/E"/>
</dbReference>
<dbReference type="InterPro" id="IPR006075">
    <property type="entry name" value="Asn/Gln-tRNA_Trfase_suB/E_cat"/>
</dbReference>
<dbReference type="InterPro" id="IPR018027">
    <property type="entry name" value="Asn/Gln_amidotransferase"/>
</dbReference>
<dbReference type="InterPro" id="IPR003789">
    <property type="entry name" value="Asn/Gln_tRNA_amidoTrase-B-like"/>
</dbReference>
<dbReference type="InterPro" id="IPR004115">
    <property type="entry name" value="GAD-like_sf"/>
</dbReference>
<dbReference type="InterPro" id="IPR029351">
    <property type="entry name" value="GAD_dom"/>
</dbReference>
<dbReference type="InterPro" id="IPR042114">
    <property type="entry name" value="GatB_C_1"/>
</dbReference>
<dbReference type="InterPro" id="IPR023168">
    <property type="entry name" value="GatB_Yqey_C_2"/>
</dbReference>
<dbReference type="InterPro" id="IPR004414">
    <property type="entry name" value="GatE"/>
</dbReference>
<dbReference type="InterPro" id="IPR017958">
    <property type="entry name" value="Gln-tRNA_amidoTrfase_suB_CS"/>
</dbReference>
<dbReference type="InterPro" id="IPR014746">
    <property type="entry name" value="Gln_synth/guanido_kin_cat_dom"/>
</dbReference>
<dbReference type="NCBIfam" id="TIGR00134">
    <property type="entry name" value="gatE_arch"/>
    <property type="match status" value="1"/>
</dbReference>
<dbReference type="NCBIfam" id="NF003107">
    <property type="entry name" value="PRK04028.1"/>
    <property type="match status" value="1"/>
</dbReference>
<dbReference type="PANTHER" id="PTHR11659">
    <property type="entry name" value="GLUTAMYL-TRNA GLN AMIDOTRANSFERASE SUBUNIT B MITOCHONDRIAL AND PROKARYOTIC PET112-RELATED"/>
    <property type="match status" value="1"/>
</dbReference>
<dbReference type="PANTHER" id="PTHR11659:SF2">
    <property type="entry name" value="GLUTAMYL-TRNA(GLN) AMIDOTRANSFERASE SUBUNIT E"/>
    <property type="match status" value="1"/>
</dbReference>
<dbReference type="Pfam" id="PF02938">
    <property type="entry name" value="GAD"/>
    <property type="match status" value="1"/>
</dbReference>
<dbReference type="Pfam" id="PF02934">
    <property type="entry name" value="GatB_N"/>
    <property type="match status" value="1"/>
</dbReference>
<dbReference type="Pfam" id="PF02637">
    <property type="entry name" value="GatB_Yqey"/>
    <property type="match status" value="1"/>
</dbReference>
<dbReference type="SMART" id="SM00845">
    <property type="entry name" value="GatB_Yqey"/>
    <property type="match status" value="1"/>
</dbReference>
<dbReference type="SUPFAM" id="SSF55261">
    <property type="entry name" value="GAD domain-like"/>
    <property type="match status" value="1"/>
</dbReference>
<dbReference type="SUPFAM" id="SSF89095">
    <property type="entry name" value="GatB/YqeY motif"/>
    <property type="match status" value="1"/>
</dbReference>
<dbReference type="SUPFAM" id="SSF55931">
    <property type="entry name" value="Glutamine synthetase/guanido kinase"/>
    <property type="match status" value="1"/>
</dbReference>
<dbReference type="PROSITE" id="PS01234">
    <property type="entry name" value="GATB"/>
    <property type="match status" value="1"/>
</dbReference>
<comment type="function">
    <text evidence="1">Allows the formation of correctly charged Gln-tRNA(Gln) through the transamidation of misacylated Glu-tRNA(Gln) in organisms which lack glutaminyl-tRNA synthetase. The reaction takes place in the presence of glutamine and ATP through an activated gamma-phospho-Glu-tRNA(Gln). The GatDE system is specific for glutamate and does not act on aspartate.</text>
</comment>
<comment type="catalytic activity">
    <reaction evidence="1">
        <text>L-glutamyl-tRNA(Gln) + L-glutamine + ATP + H2O = L-glutaminyl-tRNA(Gln) + L-glutamate + ADP + phosphate + H(+)</text>
        <dbReference type="Rhea" id="RHEA:17521"/>
        <dbReference type="Rhea" id="RHEA-COMP:9681"/>
        <dbReference type="Rhea" id="RHEA-COMP:9684"/>
        <dbReference type="ChEBI" id="CHEBI:15377"/>
        <dbReference type="ChEBI" id="CHEBI:15378"/>
        <dbReference type="ChEBI" id="CHEBI:29985"/>
        <dbReference type="ChEBI" id="CHEBI:30616"/>
        <dbReference type="ChEBI" id="CHEBI:43474"/>
        <dbReference type="ChEBI" id="CHEBI:58359"/>
        <dbReference type="ChEBI" id="CHEBI:78520"/>
        <dbReference type="ChEBI" id="CHEBI:78521"/>
        <dbReference type="ChEBI" id="CHEBI:456216"/>
    </reaction>
</comment>
<comment type="subunit">
    <text evidence="1">Heterodimer of GatD and GatE.</text>
</comment>
<comment type="similarity">
    <text evidence="1">Belongs to the GatB/GatE family. GatE subfamily.</text>
</comment>
<reference key="1">
    <citation type="journal article" date="2007" name="Proc. Natl. Acad. Sci. U.S.A.">
        <title>Genomic and metabolic adaptations of Methanobrevibacter smithii to the human gut.</title>
        <authorList>
            <person name="Samuel B.S."/>
            <person name="Hansen E.E."/>
            <person name="Manchester J.K."/>
            <person name="Coutinho P.M."/>
            <person name="Henrissat B."/>
            <person name="Fulton R."/>
            <person name="Latreille P."/>
            <person name="Kim K."/>
            <person name="Wilson R.K."/>
            <person name="Gordon J.I."/>
        </authorList>
    </citation>
    <scope>NUCLEOTIDE SEQUENCE [LARGE SCALE GENOMIC DNA]</scope>
    <source>
        <strain>ATCC 35061 / DSM 861 / OCM 144 / PS</strain>
    </source>
</reference>
<keyword id="KW-0067">ATP-binding</keyword>
<keyword id="KW-0436">Ligase</keyword>
<keyword id="KW-0547">Nucleotide-binding</keyword>
<keyword id="KW-0648">Protein biosynthesis</keyword>
<feature type="chain" id="PRO_1000025481" description="Glutamyl-tRNA(Gln) amidotransferase subunit E">
    <location>
        <begin position="1"/>
        <end position="621"/>
    </location>
</feature>
<name>GATE_METS3</name>
<accession>A5UK12</accession>
<evidence type="ECO:0000255" key="1">
    <source>
        <dbReference type="HAMAP-Rule" id="MF_00588"/>
    </source>
</evidence>
<organism>
    <name type="scientific">Methanobrevibacter smithii (strain ATCC 35061 / DSM 861 / OCM 144 / PS)</name>
    <dbReference type="NCBI Taxonomy" id="420247"/>
    <lineage>
        <taxon>Archaea</taxon>
        <taxon>Methanobacteriati</taxon>
        <taxon>Methanobacteriota</taxon>
        <taxon>Methanomada group</taxon>
        <taxon>Methanobacteria</taxon>
        <taxon>Methanobacteriales</taxon>
        <taxon>Methanobacteriaceae</taxon>
        <taxon>Methanobrevibacter</taxon>
    </lineage>
</organism>
<proteinExistence type="inferred from homology"/>
<protein>
    <recommendedName>
        <fullName evidence="1">Glutamyl-tRNA(Gln) amidotransferase subunit E</fullName>
        <shortName evidence="1">Glu-ADT subunit E</shortName>
        <ecNumber evidence="1">6.3.5.-</ecNumber>
    </recommendedName>
</protein>